<reference key="1">
    <citation type="journal article" date="2001" name="Proc. Natl. Acad. Sci. U.S.A.">
        <title>Complete genomic sequence of Pasteurella multocida Pm70.</title>
        <authorList>
            <person name="May B.J."/>
            <person name="Zhang Q."/>
            <person name="Li L.L."/>
            <person name="Paustian M.L."/>
            <person name="Whittam T.S."/>
            <person name="Kapur V."/>
        </authorList>
    </citation>
    <scope>NUCLEOTIDE SEQUENCE [LARGE SCALE GENOMIC DNA]</scope>
    <source>
        <strain>Pm70</strain>
    </source>
</reference>
<protein>
    <recommendedName>
        <fullName evidence="1">Inner membrane-spanning protein YciB</fullName>
    </recommendedName>
</protein>
<sequence length="184" mass="21370">MKQLLEFIPLILFFAVYKLVGIREAAITLIIATLIQLLILKIKYGKVEKQQLFMGIAVVFFGTLTAYFNQLEYLKWKVTIVYAIFALVLLVSQYGFNKNLIKLMLGKEDALELPEQVWNRLNLGWALFFLLCMLINLYISQYLSDDLWVDFKTFGILGMTLIATIITGIYIYRYLPQTKSNNKE</sequence>
<dbReference type="EMBL" id="AE004439">
    <property type="protein sequence ID" value="AAK02413.1"/>
    <property type="molecule type" value="Genomic_DNA"/>
</dbReference>
<dbReference type="RefSeq" id="WP_005728920.1">
    <property type="nucleotide sequence ID" value="NC_002663.1"/>
</dbReference>
<dbReference type="SMR" id="P57839"/>
<dbReference type="STRING" id="272843.PM0329"/>
<dbReference type="EnsemblBacteria" id="AAK02413">
    <property type="protein sequence ID" value="AAK02413"/>
    <property type="gene ID" value="PM0329"/>
</dbReference>
<dbReference type="KEGG" id="pmu:PM0329"/>
<dbReference type="HOGENOM" id="CLU_089554_2_0_6"/>
<dbReference type="OrthoDB" id="9788219at2"/>
<dbReference type="Proteomes" id="UP000000809">
    <property type="component" value="Chromosome"/>
</dbReference>
<dbReference type="GO" id="GO:0005886">
    <property type="term" value="C:plasma membrane"/>
    <property type="evidence" value="ECO:0007669"/>
    <property type="project" value="UniProtKB-SubCell"/>
</dbReference>
<dbReference type="HAMAP" id="MF_00189">
    <property type="entry name" value="YciB"/>
    <property type="match status" value="1"/>
</dbReference>
<dbReference type="InterPro" id="IPR006008">
    <property type="entry name" value="YciB"/>
</dbReference>
<dbReference type="NCBIfam" id="TIGR00997">
    <property type="entry name" value="ispZ"/>
    <property type="match status" value="1"/>
</dbReference>
<dbReference type="NCBIfam" id="NF001324">
    <property type="entry name" value="PRK00259.1-2"/>
    <property type="match status" value="1"/>
</dbReference>
<dbReference type="PANTHER" id="PTHR36917:SF1">
    <property type="entry name" value="INNER MEMBRANE-SPANNING PROTEIN YCIB"/>
    <property type="match status" value="1"/>
</dbReference>
<dbReference type="PANTHER" id="PTHR36917">
    <property type="entry name" value="INTRACELLULAR SEPTATION PROTEIN A-RELATED"/>
    <property type="match status" value="1"/>
</dbReference>
<dbReference type="Pfam" id="PF04279">
    <property type="entry name" value="IspA"/>
    <property type="match status" value="1"/>
</dbReference>
<feature type="chain" id="PRO_0000206538" description="Inner membrane-spanning protein YciB">
    <location>
        <begin position="1"/>
        <end position="184"/>
    </location>
</feature>
<feature type="transmembrane region" description="Helical" evidence="1">
    <location>
        <begin position="19"/>
        <end position="39"/>
    </location>
</feature>
<feature type="transmembrane region" description="Helical" evidence="1">
    <location>
        <begin position="52"/>
        <end position="72"/>
    </location>
</feature>
<feature type="transmembrane region" description="Helical" evidence="1">
    <location>
        <begin position="76"/>
        <end position="96"/>
    </location>
</feature>
<feature type="transmembrane region" description="Helical" evidence="1">
    <location>
        <begin position="123"/>
        <end position="143"/>
    </location>
</feature>
<feature type="transmembrane region" description="Helical" evidence="1">
    <location>
        <begin position="151"/>
        <end position="171"/>
    </location>
</feature>
<evidence type="ECO:0000255" key="1">
    <source>
        <dbReference type="HAMAP-Rule" id="MF_00189"/>
    </source>
</evidence>
<gene>
    <name evidence="1" type="primary">yciB</name>
    <name type="ordered locus">PM0329</name>
</gene>
<comment type="function">
    <text evidence="1">Plays a role in cell envelope biogenesis, maintenance of cell envelope integrity and membrane homeostasis.</text>
</comment>
<comment type="subcellular location">
    <subcellularLocation>
        <location evidence="1">Cell inner membrane</location>
        <topology evidence="1">Multi-pass membrane protein</topology>
    </subcellularLocation>
</comment>
<comment type="similarity">
    <text evidence="1">Belongs to the YciB family.</text>
</comment>
<name>YCIB_PASMU</name>
<accession>P57839</accession>
<organism>
    <name type="scientific">Pasteurella multocida (strain Pm70)</name>
    <dbReference type="NCBI Taxonomy" id="272843"/>
    <lineage>
        <taxon>Bacteria</taxon>
        <taxon>Pseudomonadati</taxon>
        <taxon>Pseudomonadota</taxon>
        <taxon>Gammaproteobacteria</taxon>
        <taxon>Pasteurellales</taxon>
        <taxon>Pasteurellaceae</taxon>
        <taxon>Pasteurella</taxon>
    </lineage>
</organism>
<keyword id="KW-0997">Cell inner membrane</keyword>
<keyword id="KW-1003">Cell membrane</keyword>
<keyword id="KW-0472">Membrane</keyword>
<keyword id="KW-1185">Reference proteome</keyword>
<keyword id="KW-0812">Transmembrane</keyword>
<keyword id="KW-1133">Transmembrane helix</keyword>
<proteinExistence type="inferred from homology"/>